<gene>
    <name type="ordered locus">FPV008</name>
</gene>
<gene>
    <name type="ordered locus">FPV253</name>
</gene>
<organismHost>
    <name type="scientific">Vertebrata</name>
    <dbReference type="NCBI Taxonomy" id="7742"/>
</organismHost>
<organism>
    <name type="scientific">Fowlpox virus (strain NVSL)</name>
    <name type="common">FPV</name>
    <dbReference type="NCBI Taxonomy" id="928301"/>
    <lineage>
        <taxon>Viruses</taxon>
        <taxon>Varidnaviria</taxon>
        <taxon>Bamfordvirae</taxon>
        <taxon>Nucleocytoviricota</taxon>
        <taxon>Pokkesviricetes</taxon>
        <taxon>Chitovirales</taxon>
        <taxon>Poxviridae</taxon>
        <taxon>Chordopoxvirinae</taxon>
        <taxon>Avipoxvirus</taxon>
        <taxon>Fowlpox virus</taxon>
    </lineage>
</organism>
<reference key="1">
    <citation type="journal article" date="1988" name="J. Gen. Virol.">
        <title>Sequence analysis of an 11.2 kilobase, near-terminal, BamHI fragment of fowlpox virus.</title>
        <authorList>
            <person name="Tomley F."/>
            <person name="Binns M."/>
            <person name="Campbell J."/>
            <person name="Boursnell M.E.G."/>
        </authorList>
    </citation>
    <scope>NUCLEOTIDE SEQUENCE [GENOMIC DNA]</scope>
    <source>
        <strain>FP-9 / Isolate HP-438</strain>
    </source>
</reference>
<reference key="2">
    <citation type="journal article" date="2000" name="J. Virol.">
        <title>The genome of fowlpox virus.</title>
        <authorList>
            <person name="Afonso C.L."/>
            <person name="Tulman E.R."/>
            <person name="Lu Z."/>
            <person name="Zsak L."/>
            <person name="Kutish G.F."/>
            <person name="Rock D.L."/>
        </authorList>
    </citation>
    <scope>NUCLEOTIDE SEQUENCE [LARGE SCALE GENOMIC DNA]</scope>
</reference>
<evidence type="ECO:0000255" key="1">
    <source>
        <dbReference type="PROSITE-ProRule" id="PRU00040"/>
    </source>
</evidence>
<sequence length="167" mass="19869">MPILLKKQVSEVSCYAITVLGILCLILFTILVVVTCKWYYAFPYFSKVCPDEWIGYNSKCYYFTINETNWNDSKKLCDVMDSSLIRFDNIETLNFVSRYGKGSYWIDINQNRKIPGINFSLYYEQGVNDICLLFDTSNIIEMSCIFHERTICVKEDRYTHWYTEYMR</sequence>
<accession>P14370</accession>
<feature type="chain" id="PRO_0000046726" description="Putative C-type lectin protein FPV008/FPV253">
    <location>
        <begin position="1"/>
        <end position="167"/>
    </location>
</feature>
<feature type="domain" description="C-type lectin" evidence="1">
    <location>
        <begin position="49"/>
        <end position="152"/>
    </location>
</feature>
<feature type="disulfide bond" evidence="1">
    <location>
        <begin position="77"/>
        <end position="152"/>
    </location>
</feature>
<feature type="disulfide bond" evidence="1">
    <location>
        <begin position="131"/>
        <end position="144"/>
    </location>
</feature>
<dbReference type="EMBL" id="D00295">
    <property type="protein sequence ID" value="BAA00192.1"/>
    <property type="molecule type" value="Genomic_DNA"/>
</dbReference>
<dbReference type="EMBL" id="AF198100">
    <property type="protein sequence ID" value="AAF44607.1"/>
    <property type="molecule type" value="Genomic_DNA"/>
</dbReference>
<dbReference type="EMBL" id="AF198100">
    <property type="protein sequence ID" value="AAF44608.1"/>
    <property type="molecule type" value="Genomic_DNA"/>
</dbReference>
<dbReference type="PIR" id="B29963">
    <property type="entry name" value="WMVZF2"/>
</dbReference>
<dbReference type="RefSeq" id="NP_038971.1">
    <property type="nucleotide sequence ID" value="NC_002188.1"/>
</dbReference>
<dbReference type="RefSeq" id="NP_039216.1">
    <property type="nucleotide sequence ID" value="NC_002188.1"/>
</dbReference>
<dbReference type="SMR" id="P14370"/>
<dbReference type="GeneID" id="1486835"/>
<dbReference type="GeneID" id="1486836"/>
<dbReference type="KEGG" id="vg:1486835"/>
<dbReference type="KEGG" id="vg:1486836"/>
<dbReference type="Proteomes" id="UP000008597">
    <property type="component" value="Segment"/>
</dbReference>
<dbReference type="GO" id="GO:0030246">
    <property type="term" value="F:carbohydrate binding"/>
    <property type="evidence" value="ECO:0007669"/>
    <property type="project" value="UniProtKB-KW"/>
</dbReference>
<dbReference type="Gene3D" id="3.10.100.10">
    <property type="entry name" value="Mannose-Binding Protein A, subunit A"/>
    <property type="match status" value="1"/>
</dbReference>
<dbReference type="InterPro" id="IPR001304">
    <property type="entry name" value="C-type_lectin-like"/>
</dbReference>
<dbReference type="InterPro" id="IPR016186">
    <property type="entry name" value="C-type_lectin-like/link_sf"/>
</dbReference>
<dbReference type="InterPro" id="IPR050828">
    <property type="entry name" value="C-type_lectin/matrix_domain"/>
</dbReference>
<dbReference type="InterPro" id="IPR016187">
    <property type="entry name" value="CTDL_fold"/>
</dbReference>
<dbReference type="PANTHER" id="PTHR45710:SF35">
    <property type="entry name" value="C-TYPE LECTIN DOMAIN FAMILY 2 MEMBER D"/>
    <property type="match status" value="1"/>
</dbReference>
<dbReference type="PANTHER" id="PTHR45710">
    <property type="entry name" value="C-TYPE LECTIN DOMAIN-CONTAINING PROTEIN 180"/>
    <property type="match status" value="1"/>
</dbReference>
<dbReference type="Pfam" id="PF05473">
    <property type="entry name" value="UL45"/>
    <property type="match status" value="1"/>
</dbReference>
<dbReference type="SMART" id="SM00034">
    <property type="entry name" value="CLECT"/>
    <property type="match status" value="1"/>
</dbReference>
<dbReference type="SUPFAM" id="SSF56436">
    <property type="entry name" value="C-type lectin-like"/>
    <property type="match status" value="1"/>
</dbReference>
<dbReference type="PROSITE" id="PS50041">
    <property type="entry name" value="C_TYPE_LECTIN_2"/>
    <property type="match status" value="1"/>
</dbReference>
<keyword id="KW-1015">Disulfide bond</keyword>
<keyword id="KW-0430">Lectin</keyword>
<keyword id="KW-1185">Reference proteome</keyword>
<name>V008_FOWPN</name>
<proteinExistence type="predicted"/>
<protein>
    <recommendedName>
        <fullName>Putative C-type lectin protein FPV008/FPV253</fullName>
    </recommendedName>
    <alternativeName>
        <fullName>BamHI-ORF2</fullName>
    </alternativeName>
</protein>